<proteinExistence type="inferred from homology"/>
<name>RHLB_CITK8</name>
<dbReference type="EC" id="3.6.4.13" evidence="1"/>
<dbReference type="EMBL" id="CP000822">
    <property type="protein sequence ID" value="ABV11296.1"/>
    <property type="molecule type" value="Genomic_DNA"/>
</dbReference>
<dbReference type="RefSeq" id="WP_012131132.1">
    <property type="nucleotide sequence ID" value="NC_009792.1"/>
</dbReference>
<dbReference type="SMR" id="A8ACT3"/>
<dbReference type="STRING" id="290338.CKO_00122"/>
<dbReference type="GeneID" id="45134420"/>
<dbReference type="KEGG" id="cko:CKO_00122"/>
<dbReference type="HOGENOM" id="CLU_003041_1_3_6"/>
<dbReference type="OrthoDB" id="9805696at2"/>
<dbReference type="Proteomes" id="UP000008148">
    <property type="component" value="Chromosome"/>
</dbReference>
<dbReference type="GO" id="GO:0005829">
    <property type="term" value="C:cytosol"/>
    <property type="evidence" value="ECO:0007669"/>
    <property type="project" value="TreeGrafter"/>
</dbReference>
<dbReference type="GO" id="GO:0005524">
    <property type="term" value="F:ATP binding"/>
    <property type="evidence" value="ECO:0007669"/>
    <property type="project" value="UniProtKB-UniRule"/>
</dbReference>
<dbReference type="GO" id="GO:0016887">
    <property type="term" value="F:ATP hydrolysis activity"/>
    <property type="evidence" value="ECO:0007669"/>
    <property type="project" value="RHEA"/>
</dbReference>
<dbReference type="GO" id="GO:0003723">
    <property type="term" value="F:RNA binding"/>
    <property type="evidence" value="ECO:0007669"/>
    <property type="project" value="UniProtKB-UniRule"/>
</dbReference>
<dbReference type="GO" id="GO:0003724">
    <property type="term" value="F:RNA helicase activity"/>
    <property type="evidence" value="ECO:0007669"/>
    <property type="project" value="UniProtKB-UniRule"/>
</dbReference>
<dbReference type="GO" id="GO:0006401">
    <property type="term" value="P:RNA catabolic process"/>
    <property type="evidence" value="ECO:0007669"/>
    <property type="project" value="UniProtKB-UniRule"/>
</dbReference>
<dbReference type="CDD" id="cd00268">
    <property type="entry name" value="DEADc"/>
    <property type="match status" value="1"/>
</dbReference>
<dbReference type="CDD" id="cd18787">
    <property type="entry name" value="SF2_C_DEAD"/>
    <property type="match status" value="1"/>
</dbReference>
<dbReference type="FunFam" id="3.40.50.300:FF:000008">
    <property type="entry name" value="ATP-dependent RNA helicase RhlB"/>
    <property type="match status" value="1"/>
</dbReference>
<dbReference type="FunFam" id="3.40.50.300:FF:000312">
    <property type="entry name" value="ATP-dependent RNA helicase RhlB"/>
    <property type="match status" value="1"/>
</dbReference>
<dbReference type="Gene3D" id="3.40.50.300">
    <property type="entry name" value="P-loop containing nucleotide triphosphate hydrolases"/>
    <property type="match status" value="2"/>
</dbReference>
<dbReference type="HAMAP" id="MF_00661">
    <property type="entry name" value="DEAD_helicase_RhlB"/>
    <property type="match status" value="1"/>
</dbReference>
<dbReference type="InterPro" id="IPR011545">
    <property type="entry name" value="DEAD/DEAH_box_helicase_dom"/>
</dbReference>
<dbReference type="InterPro" id="IPR050079">
    <property type="entry name" value="DEAD_box_RNA_helicase"/>
</dbReference>
<dbReference type="InterPro" id="IPR014001">
    <property type="entry name" value="Helicase_ATP-bd"/>
</dbReference>
<dbReference type="InterPro" id="IPR001650">
    <property type="entry name" value="Helicase_C-like"/>
</dbReference>
<dbReference type="InterPro" id="IPR027417">
    <property type="entry name" value="P-loop_NTPase"/>
</dbReference>
<dbReference type="InterPro" id="IPR000629">
    <property type="entry name" value="RNA-helicase_DEAD-box_CS"/>
</dbReference>
<dbReference type="InterPro" id="IPR023554">
    <property type="entry name" value="RNA_helicase_ATP-dep_RhlB"/>
</dbReference>
<dbReference type="InterPro" id="IPR014014">
    <property type="entry name" value="RNA_helicase_DEAD_Q_motif"/>
</dbReference>
<dbReference type="NCBIfam" id="NF003419">
    <property type="entry name" value="PRK04837.1"/>
    <property type="match status" value="1"/>
</dbReference>
<dbReference type="PANTHER" id="PTHR47959:SF10">
    <property type="entry name" value="ATP-DEPENDENT RNA HELICASE RHLB"/>
    <property type="match status" value="1"/>
</dbReference>
<dbReference type="PANTHER" id="PTHR47959">
    <property type="entry name" value="ATP-DEPENDENT RNA HELICASE RHLE-RELATED"/>
    <property type="match status" value="1"/>
</dbReference>
<dbReference type="Pfam" id="PF00270">
    <property type="entry name" value="DEAD"/>
    <property type="match status" value="1"/>
</dbReference>
<dbReference type="Pfam" id="PF00271">
    <property type="entry name" value="Helicase_C"/>
    <property type="match status" value="1"/>
</dbReference>
<dbReference type="SMART" id="SM00487">
    <property type="entry name" value="DEXDc"/>
    <property type="match status" value="1"/>
</dbReference>
<dbReference type="SMART" id="SM00490">
    <property type="entry name" value="HELICc"/>
    <property type="match status" value="1"/>
</dbReference>
<dbReference type="SUPFAM" id="SSF52540">
    <property type="entry name" value="P-loop containing nucleoside triphosphate hydrolases"/>
    <property type="match status" value="1"/>
</dbReference>
<dbReference type="PROSITE" id="PS00039">
    <property type="entry name" value="DEAD_ATP_HELICASE"/>
    <property type="match status" value="1"/>
</dbReference>
<dbReference type="PROSITE" id="PS51192">
    <property type="entry name" value="HELICASE_ATP_BIND_1"/>
    <property type="match status" value="1"/>
</dbReference>
<dbReference type="PROSITE" id="PS51194">
    <property type="entry name" value="HELICASE_CTER"/>
    <property type="match status" value="1"/>
</dbReference>
<dbReference type="PROSITE" id="PS51195">
    <property type="entry name" value="Q_MOTIF"/>
    <property type="match status" value="1"/>
</dbReference>
<organism>
    <name type="scientific">Citrobacter koseri (strain ATCC BAA-895 / CDC 4225-83 / SGSC4696)</name>
    <dbReference type="NCBI Taxonomy" id="290338"/>
    <lineage>
        <taxon>Bacteria</taxon>
        <taxon>Pseudomonadati</taxon>
        <taxon>Pseudomonadota</taxon>
        <taxon>Gammaproteobacteria</taxon>
        <taxon>Enterobacterales</taxon>
        <taxon>Enterobacteriaceae</taxon>
        <taxon>Citrobacter</taxon>
    </lineage>
</organism>
<feature type="chain" id="PRO_1000082836" description="ATP-dependent RNA helicase RhlB">
    <location>
        <begin position="1"/>
        <end position="421"/>
    </location>
</feature>
<feature type="domain" description="Helicase ATP-binding" evidence="1">
    <location>
        <begin position="40"/>
        <end position="219"/>
    </location>
</feature>
<feature type="domain" description="Helicase C-terminal" evidence="1">
    <location>
        <begin position="245"/>
        <end position="390"/>
    </location>
</feature>
<feature type="region of interest" description="Disordered" evidence="2">
    <location>
        <begin position="393"/>
        <end position="421"/>
    </location>
</feature>
<feature type="short sequence motif" description="Q motif">
    <location>
        <begin position="9"/>
        <end position="37"/>
    </location>
</feature>
<feature type="short sequence motif" description="DEAD box">
    <location>
        <begin position="165"/>
        <end position="168"/>
    </location>
</feature>
<feature type="compositionally biased region" description="Low complexity" evidence="2">
    <location>
        <begin position="403"/>
        <end position="414"/>
    </location>
</feature>
<feature type="binding site" evidence="1">
    <location>
        <begin position="53"/>
        <end position="60"/>
    </location>
    <ligand>
        <name>ATP</name>
        <dbReference type="ChEBI" id="CHEBI:30616"/>
    </ligand>
</feature>
<evidence type="ECO:0000255" key="1">
    <source>
        <dbReference type="HAMAP-Rule" id="MF_00661"/>
    </source>
</evidence>
<evidence type="ECO:0000256" key="2">
    <source>
        <dbReference type="SAM" id="MobiDB-lite"/>
    </source>
</evidence>
<reference key="1">
    <citation type="submission" date="2007-08" db="EMBL/GenBank/DDBJ databases">
        <authorList>
            <consortium name="The Citrobacter koseri Genome Sequencing Project"/>
            <person name="McClelland M."/>
            <person name="Sanderson E.K."/>
            <person name="Porwollik S."/>
            <person name="Spieth J."/>
            <person name="Clifton W.S."/>
            <person name="Latreille P."/>
            <person name="Courtney L."/>
            <person name="Wang C."/>
            <person name="Pepin K."/>
            <person name="Bhonagiri V."/>
            <person name="Nash W."/>
            <person name="Johnson M."/>
            <person name="Thiruvilangam P."/>
            <person name="Wilson R."/>
        </authorList>
    </citation>
    <scope>NUCLEOTIDE SEQUENCE [LARGE SCALE GENOMIC DNA]</scope>
    <source>
        <strain>ATCC BAA-895 / CDC 4225-83 / SGSC4696</strain>
    </source>
</reference>
<keyword id="KW-0067">ATP-binding</keyword>
<keyword id="KW-0963">Cytoplasm</keyword>
<keyword id="KW-0347">Helicase</keyword>
<keyword id="KW-0378">Hydrolase</keyword>
<keyword id="KW-0547">Nucleotide-binding</keyword>
<keyword id="KW-1185">Reference proteome</keyword>
<keyword id="KW-0694">RNA-binding</keyword>
<accession>A8ACT3</accession>
<gene>
    <name evidence="1" type="primary">rhlB</name>
    <name type="ordered locus">CKO_00122</name>
</gene>
<protein>
    <recommendedName>
        <fullName evidence="1">ATP-dependent RNA helicase RhlB</fullName>
        <ecNumber evidence="1">3.6.4.13</ecNumber>
    </recommendedName>
</protein>
<sequence>MSKTHLTEQKFSDFALHPKVIEALENKGFHNCTPIQALALPLTLAGRDVAGQAQTGTGKTMAFLTSSFHYLLSHPAIDDRKVNQPRALIMAPTRELAVQIHADAEPLAQTTGLKLGLAYGGDGYDKQLKVLESGVDILIGTTGRLIDYAKQNHINLGAIQVVVLDEADRMYDLGFIKDIRWLFRRMPPANQRLNMLFSATLSYRVRELAFEQMNNAEYVEVEPEQKTGHRIKEELFYPSNEEKMRLLQTLIEEEWPDRAIVFANTKHRCEDIWGHLAADGHRVGLLTGDVAQKKRLRILDEFTRGDLDILVATDVAARGLHIPAVTHVFNYDLPDDCEDYVHRIGRTGRAGASGHSISLACEEYALNLPAIEAYIGHSIPVSKYNPEALMTNLPKPLRLTRSRPGNGPRRTGAPRNRRRSG</sequence>
<comment type="function">
    <text evidence="1">DEAD-box RNA helicase involved in RNA degradation. Has RNA-dependent ATPase activity and unwinds double-stranded RNA.</text>
</comment>
<comment type="catalytic activity">
    <reaction evidence="1">
        <text>ATP + H2O = ADP + phosphate + H(+)</text>
        <dbReference type="Rhea" id="RHEA:13065"/>
        <dbReference type="ChEBI" id="CHEBI:15377"/>
        <dbReference type="ChEBI" id="CHEBI:15378"/>
        <dbReference type="ChEBI" id="CHEBI:30616"/>
        <dbReference type="ChEBI" id="CHEBI:43474"/>
        <dbReference type="ChEBI" id="CHEBI:456216"/>
        <dbReference type="EC" id="3.6.4.13"/>
    </reaction>
</comment>
<comment type="subunit">
    <text evidence="1">Component of the RNA degradosome, which is a multiprotein complex involved in RNA processing and mRNA degradation.</text>
</comment>
<comment type="subcellular location">
    <subcellularLocation>
        <location evidence="1">Cytoplasm</location>
    </subcellularLocation>
</comment>
<comment type="similarity">
    <text evidence="1">Belongs to the DEAD box helicase family. RhlB subfamily.</text>
</comment>